<keyword id="KW-0472">Membrane</keyword>
<keyword id="KW-1185">Reference proteome</keyword>
<keyword id="KW-0812">Transmembrane</keyword>
<keyword id="KW-1133">Transmembrane helix</keyword>
<organism>
    <name type="scientific">Acanthamoeba polyphaga mimivirus</name>
    <name type="common">APMV</name>
    <dbReference type="NCBI Taxonomy" id="212035"/>
    <lineage>
        <taxon>Viruses</taxon>
        <taxon>Varidnaviria</taxon>
        <taxon>Bamfordvirae</taxon>
        <taxon>Nucleocytoviricota</taxon>
        <taxon>Megaviricetes</taxon>
        <taxon>Imitervirales</taxon>
        <taxon>Mimiviridae</taxon>
        <taxon>Megamimivirinae</taxon>
        <taxon>Mimivirus</taxon>
        <taxon>Mimivirus bradfordmassiliense</taxon>
    </lineage>
</organism>
<feature type="chain" id="PRO_0000243965" description="Uncharacterized protein R390">
    <location>
        <begin position="1"/>
        <end position="763"/>
    </location>
</feature>
<feature type="transmembrane region" description="Helical" evidence="1">
    <location>
        <begin position="684"/>
        <end position="700"/>
    </location>
</feature>
<feature type="domain" description="TR mART core" evidence="2">
    <location>
        <begin position="380"/>
        <end position="607"/>
    </location>
</feature>
<organismHost>
    <name type="scientific">Acanthamoeba polyphaga</name>
    <name type="common">Amoeba</name>
    <dbReference type="NCBI Taxonomy" id="5757"/>
</organismHost>
<reference key="1">
    <citation type="journal article" date="2004" name="Science">
        <title>The 1.2-megabase genome sequence of Mimivirus.</title>
        <authorList>
            <person name="Raoult D."/>
            <person name="Audic S."/>
            <person name="Robert C."/>
            <person name="Abergel C."/>
            <person name="Renesto P."/>
            <person name="Ogata H."/>
            <person name="La Scola B."/>
            <person name="Susan M."/>
            <person name="Claverie J.-M."/>
        </authorList>
    </citation>
    <scope>NUCLEOTIDE SEQUENCE [LARGE SCALE GENOMIC DNA]</scope>
    <source>
        <strain>Rowbotham-Bradford</strain>
    </source>
</reference>
<comment type="subcellular location">
    <subcellularLocation>
        <location evidence="3">Membrane</location>
        <topology evidence="3">Single-pass membrane protein</topology>
    </subcellularLocation>
</comment>
<proteinExistence type="predicted"/>
<sequence>MYVYTMENVPPSTNYLYNPKIVYNDHDIEFNVNYMPPLELDLGMAEINDIDNSINNFTNDTIIINPHTNFNSRIDGIYNINGKPIQSITDLYNLINTIFYDLIDVIIKSTLPIFNEHILYRVIGSKSLELYTNPVINNVKILTYDIEIVGTNNEIVLFLEKITMQLNAYINYKYGPNRYFIRNILRKYNLIDETCNWHYENESNNMFKFGFIKTTNSYQPCIFIHLILKKNLFTTGLVNNSNQTNNNHNVIYYPCVKFYSSKIKYKPITIANINYGRLPLIINKLLDEINTRYYNKELLDNLLNVNYFICNPIIQQQYCSENIKNCFDKNFSSAYYTDKYLSDFIPTKTNIKIVKDILNQYYGTYLFEFIKTHNCRSVFDSVLNPFNTNDKKQFINKIVDIVRNVDENNDRSLYRYTQEDHIPINLYCQMRNVGLLNDPKILDLIENFHQTKNDVDNLDNIYGILSGITEYTNSIDHLFKDEFDVVSVQTFLYFNAPNGQIIDSSNLTMDIGSIIYMPNFLSTSYVFFKDIHKFLSPVKVLYKIKIKKDIMRPLNWILVDKYSQLSNEKEILIKSGSFFVIESIEYLPVEKINESEYYNIKVITMRLCYDMDDAISHASNFGTEKLLYGYVNSNNIIGGSSNSQIKKISGPIKNITIINTNTLIIDPELFRTTSLNNYNDILNSYVSIYALLCPLLTNIYNKISFIHKKITLNYNSQKNSEKNLPIFDIPNIYSDSESHLDNLFYNKYRKYKTKYIYHKYKSN</sequence>
<gene>
    <name type="ordered locus">MIMI_R390</name>
</gene>
<protein>
    <recommendedName>
        <fullName>Uncharacterized protein R390</fullName>
    </recommendedName>
</protein>
<name>YR390_MIMIV</name>
<dbReference type="EMBL" id="AY653733">
    <property type="protein sequence ID" value="AAV50659.1"/>
    <property type="molecule type" value="Genomic_DNA"/>
</dbReference>
<dbReference type="KEGG" id="vg:9925012"/>
<dbReference type="OrthoDB" id="30270at10239"/>
<dbReference type="Proteomes" id="UP000001134">
    <property type="component" value="Genome"/>
</dbReference>
<dbReference type="GO" id="GO:0016020">
    <property type="term" value="C:membrane"/>
    <property type="evidence" value="ECO:0007669"/>
    <property type="project" value="UniProtKB-SubCell"/>
</dbReference>
<dbReference type="Gene3D" id="3.90.176.10">
    <property type="entry name" value="Toxin ADP-ribosyltransferase, Chain A, domain 1"/>
    <property type="match status" value="1"/>
</dbReference>
<dbReference type="SUPFAM" id="SSF56399">
    <property type="entry name" value="ADP-ribosylation"/>
    <property type="match status" value="1"/>
</dbReference>
<dbReference type="PROSITE" id="PS51996">
    <property type="entry name" value="TR_MART"/>
    <property type="match status" value="1"/>
</dbReference>
<evidence type="ECO:0000255" key="1"/>
<evidence type="ECO:0000255" key="2">
    <source>
        <dbReference type="PROSITE-ProRule" id="PRU01340"/>
    </source>
</evidence>
<evidence type="ECO:0000305" key="3"/>
<accession>Q5UQ44</accession>